<reference key="1">
    <citation type="journal article" date="2008" name="J. Biotechnol.">
        <title>The genome of Xanthomonas campestris pv. campestris B100 and its use for the reconstruction of metabolic pathways involved in xanthan biosynthesis.</title>
        <authorList>
            <person name="Vorhoelter F.-J."/>
            <person name="Schneiker S."/>
            <person name="Goesmann A."/>
            <person name="Krause L."/>
            <person name="Bekel T."/>
            <person name="Kaiser O."/>
            <person name="Linke B."/>
            <person name="Patschkowski T."/>
            <person name="Rueckert C."/>
            <person name="Schmid J."/>
            <person name="Sidhu V.K."/>
            <person name="Sieber V."/>
            <person name="Tauch A."/>
            <person name="Watt S.A."/>
            <person name="Weisshaar B."/>
            <person name="Becker A."/>
            <person name="Niehaus K."/>
            <person name="Puehler A."/>
        </authorList>
    </citation>
    <scope>NUCLEOTIDE SEQUENCE [LARGE SCALE GENOMIC DNA]</scope>
    <source>
        <strain>B100</strain>
    </source>
</reference>
<comment type="function">
    <text evidence="1">This protein is one of the two subunits of integration host factor, a specific DNA-binding protein that functions in genetic recombination as well as in transcriptional and translational control.</text>
</comment>
<comment type="subunit">
    <text evidence="1">Heterodimer of an alpha and a beta chain.</text>
</comment>
<comment type="similarity">
    <text evidence="1">Belongs to the bacterial histone-like protein family.</text>
</comment>
<protein>
    <recommendedName>
        <fullName evidence="1">Integration host factor subunit beta</fullName>
        <shortName evidence="1">IHF-beta</shortName>
    </recommendedName>
</protein>
<sequence length="103" mass="11403">MTKSELIEILARRQAHLKSDDVDLAVKSLLEMMGQALSDGDRIEIRGFGSFSLHYRPPRLGRNPKTGESVALPGKHVPHFKPGKELRERVSSVVPVDMVDAAD</sequence>
<feature type="chain" id="PRO_1000122248" description="Integration host factor subunit beta">
    <location>
        <begin position="1"/>
        <end position="103"/>
    </location>
</feature>
<feature type="region of interest" description="Disordered" evidence="2">
    <location>
        <begin position="62"/>
        <end position="81"/>
    </location>
</feature>
<accession>B0RSA5</accession>
<organism>
    <name type="scientific">Xanthomonas campestris pv. campestris (strain B100)</name>
    <dbReference type="NCBI Taxonomy" id="509169"/>
    <lineage>
        <taxon>Bacteria</taxon>
        <taxon>Pseudomonadati</taxon>
        <taxon>Pseudomonadota</taxon>
        <taxon>Gammaproteobacteria</taxon>
        <taxon>Lysobacterales</taxon>
        <taxon>Lysobacteraceae</taxon>
        <taxon>Xanthomonas</taxon>
    </lineage>
</organism>
<evidence type="ECO:0000255" key="1">
    <source>
        <dbReference type="HAMAP-Rule" id="MF_00381"/>
    </source>
</evidence>
<evidence type="ECO:0000256" key="2">
    <source>
        <dbReference type="SAM" id="MobiDB-lite"/>
    </source>
</evidence>
<dbReference type="EMBL" id="AM920689">
    <property type="protein sequence ID" value="CAP51340.1"/>
    <property type="molecule type" value="Genomic_DNA"/>
</dbReference>
<dbReference type="SMR" id="B0RSA5"/>
<dbReference type="KEGG" id="xca:xcc-b100_1987"/>
<dbReference type="HOGENOM" id="CLU_105066_2_0_6"/>
<dbReference type="Proteomes" id="UP000001188">
    <property type="component" value="Chromosome"/>
</dbReference>
<dbReference type="GO" id="GO:0005694">
    <property type="term" value="C:chromosome"/>
    <property type="evidence" value="ECO:0007669"/>
    <property type="project" value="InterPro"/>
</dbReference>
<dbReference type="GO" id="GO:0005829">
    <property type="term" value="C:cytosol"/>
    <property type="evidence" value="ECO:0007669"/>
    <property type="project" value="TreeGrafter"/>
</dbReference>
<dbReference type="GO" id="GO:0003677">
    <property type="term" value="F:DNA binding"/>
    <property type="evidence" value="ECO:0007669"/>
    <property type="project" value="UniProtKB-UniRule"/>
</dbReference>
<dbReference type="GO" id="GO:0030527">
    <property type="term" value="F:structural constituent of chromatin"/>
    <property type="evidence" value="ECO:0007669"/>
    <property type="project" value="InterPro"/>
</dbReference>
<dbReference type="GO" id="GO:0006310">
    <property type="term" value="P:DNA recombination"/>
    <property type="evidence" value="ECO:0007669"/>
    <property type="project" value="UniProtKB-UniRule"/>
</dbReference>
<dbReference type="GO" id="GO:0006355">
    <property type="term" value="P:regulation of DNA-templated transcription"/>
    <property type="evidence" value="ECO:0007669"/>
    <property type="project" value="UniProtKB-UniRule"/>
</dbReference>
<dbReference type="GO" id="GO:0006417">
    <property type="term" value="P:regulation of translation"/>
    <property type="evidence" value="ECO:0007669"/>
    <property type="project" value="UniProtKB-UniRule"/>
</dbReference>
<dbReference type="CDD" id="cd13836">
    <property type="entry name" value="IHF_B"/>
    <property type="match status" value="1"/>
</dbReference>
<dbReference type="FunFam" id="4.10.520.10:FF:000003">
    <property type="entry name" value="Integration host factor subunit beta"/>
    <property type="match status" value="1"/>
</dbReference>
<dbReference type="Gene3D" id="4.10.520.10">
    <property type="entry name" value="IHF-like DNA-binding proteins"/>
    <property type="match status" value="1"/>
</dbReference>
<dbReference type="HAMAP" id="MF_00381">
    <property type="entry name" value="IHF_beta"/>
    <property type="match status" value="1"/>
</dbReference>
<dbReference type="InterPro" id="IPR000119">
    <property type="entry name" value="Hist_DNA-bd"/>
</dbReference>
<dbReference type="InterPro" id="IPR020816">
    <property type="entry name" value="Histone-like_DNA-bd_CS"/>
</dbReference>
<dbReference type="InterPro" id="IPR010992">
    <property type="entry name" value="IHF-like_DNA-bd_dom_sf"/>
</dbReference>
<dbReference type="InterPro" id="IPR005685">
    <property type="entry name" value="IHF_beta"/>
</dbReference>
<dbReference type="NCBIfam" id="TIGR00988">
    <property type="entry name" value="hip"/>
    <property type="match status" value="1"/>
</dbReference>
<dbReference type="NCBIfam" id="NF001222">
    <property type="entry name" value="PRK00199.1"/>
    <property type="match status" value="1"/>
</dbReference>
<dbReference type="PANTHER" id="PTHR33175">
    <property type="entry name" value="DNA-BINDING PROTEIN HU"/>
    <property type="match status" value="1"/>
</dbReference>
<dbReference type="PANTHER" id="PTHR33175:SF5">
    <property type="entry name" value="INTEGRATION HOST FACTOR SUBUNIT BETA"/>
    <property type="match status" value="1"/>
</dbReference>
<dbReference type="Pfam" id="PF00216">
    <property type="entry name" value="Bac_DNA_binding"/>
    <property type="match status" value="1"/>
</dbReference>
<dbReference type="PRINTS" id="PR01727">
    <property type="entry name" value="DNABINDINGHU"/>
</dbReference>
<dbReference type="SMART" id="SM00411">
    <property type="entry name" value="BHL"/>
    <property type="match status" value="1"/>
</dbReference>
<dbReference type="SUPFAM" id="SSF47729">
    <property type="entry name" value="IHF-like DNA-binding proteins"/>
    <property type="match status" value="1"/>
</dbReference>
<dbReference type="PROSITE" id="PS00045">
    <property type="entry name" value="HISTONE_LIKE"/>
    <property type="match status" value="1"/>
</dbReference>
<keyword id="KW-0233">DNA recombination</keyword>
<keyword id="KW-0238">DNA-binding</keyword>
<keyword id="KW-0804">Transcription</keyword>
<keyword id="KW-0805">Transcription regulation</keyword>
<keyword id="KW-0810">Translation regulation</keyword>
<name>IHFB_XANCB</name>
<proteinExistence type="inferred from homology"/>
<gene>
    <name evidence="1" type="primary">ihfB</name>
    <name evidence="1" type="synonym">himD</name>
    <name type="ordered locus">xcc-b100_1987</name>
</gene>